<proteinExistence type="inferred from homology"/>
<name>ALG14_KLULA</name>
<organism>
    <name type="scientific">Kluyveromyces lactis (strain ATCC 8585 / CBS 2359 / DSM 70799 / NBRC 1267 / NRRL Y-1140 / WM37)</name>
    <name type="common">Yeast</name>
    <name type="synonym">Candida sphaerica</name>
    <dbReference type="NCBI Taxonomy" id="284590"/>
    <lineage>
        <taxon>Eukaryota</taxon>
        <taxon>Fungi</taxon>
        <taxon>Dikarya</taxon>
        <taxon>Ascomycota</taxon>
        <taxon>Saccharomycotina</taxon>
        <taxon>Saccharomycetes</taxon>
        <taxon>Saccharomycetales</taxon>
        <taxon>Saccharomycetaceae</taxon>
        <taxon>Kluyveromyces</taxon>
    </lineage>
</organism>
<accession>Q6CJG3</accession>
<protein>
    <recommendedName>
        <fullName>UDP-N-acetylglucosamine transferase subunit ALG14</fullName>
    </recommendedName>
    <alternativeName>
        <fullName>Asparagine-linked glycosylation protein 14</fullName>
    </alternativeName>
</protein>
<evidence type="ECO:0000250" key="1"/>
<evidence type="ECO:0000250" key="2">
    <source>
        <dbReference type="UniProtKB" id="P38242"/>
    </source>
</evidence>
<evidence type="ECO:0000255" key="3"/>
<evidence type="ECO:0000305" key="4"/>
<dbReference type="EMBL" id="CR382126">
    <property type="protein sequence ID" value="CAG98634.1"/>
    <property type="molecule type" value="Genomic_DNA"/>
</dbReference>
<dbReference type="RefSeq" id="XP_455926.1">
    <property type="nucleotide sequence ID" value="XM_455926.1"/>
</dbReference>
<dbReference type="FunCoup" id="Q6CJG3">
    <property type="interactions" value="318"/>
</dbReference>
<dbReference type="STRING" id="284590.Q6CJG3"/>
<dbReference type="CAZy" id="GT1">
    <property type="family name" value="Glycosyltransferase Family 1"/>
</dbReference>
<dbReference type="PaxDb" id="284590-Q6CJG3"/>
<dbReference type="KEGG" id="kla:KLLA0_F18865g"/>
<dbReference type="eggNOG" id="KOG3339">
    <property type="taxonomic scope" value="Eukaryota"/>
</dbReference>
<dbReference type="HOGENOM" id="CLU_064541_2_2_1"/>
<dbReference type="InParanoid" id="Q6CJG3"/>
<dbReference type="OMA" id="GTCCIIT"/>
<dbReference type="Proteomes" id="UP000000598">
    <property type="component" value="Chromosome F"/>
</dbReference>
<dbReference type="GO" id="GO:0031965">
    <property type="term" value="C:nuclear membrane"/>
    <property type="evidence" value="ECO:0007669"/>
    <property type="project" value="UniProtKB-SubCell"/>
</dbReference>
<dbReference type="GO" id="GO:0043541">
    <property type="term" value="C:UDP-N-acetylglucosamine transferase complex"/>
    <property type="evidence" value="ECO:0007669"/>
    <property type="project" value="TreeGrafter"/>
</dbReference>
<dbReference type="GO" id="GO:0004577">
    <property type="term" value="F:N-acetylglucosaminyldiphosphodolichol N-acetylglucosaminyltransferase activity"/>
    <property type="evidence" value="ECO:0007669"/>
    <property type="project" value="TreeGrafter"/>
</dbReference>
<dbReference type="GO" id="GO:0006488">
    <property type="term" value="P:dolichol-linked oligosaccharide biosynthetic process"/>
    <property type="evidence" value="ECO:0007669"/>
    <property type="project" value="InterPro"/>
</dbReference>
<dbReference type="Gene3D" id="3.40.50.2000">
    <property type="entry name" value="Glycogen Phosphorylase B"/>
    <property type="match status" value="1"/>
</dbReference>
<dbReference type="InterPro" id="IPR013969">
    <property type="entry name" value="Oligosacch_biosynth_Alg14"/>
</dbReference>
<dbReference type="PANTHER" id="PTHR12154">
    <property type="entry name" value="GLYCOSYL TRANSFERASE-RELATED"/>
    <property type="match status" value="1"/>
</dbReference>
<dbReference type="PANTHER" id="PTHR12154:SF4">
    <property type="entry name" value="UDP-N-ACETYLGLUCOSAMINE TRANSFERASE SUBUNIT ALG14 HOMOLOG"/>
    <property type="match status" value="1"/>
</dbReference>
<dbReference type="Pfam" id="PF08660">
    <property type="entry name" value="Alg14"/>
    <property type="match status" value="1"/>
</dbReference>
<comment type="function">
    <text evidence="1">Involved in protein N-glycosylation. Essential for the second step of the dolichol-linked oligosaccharide pathway. Anchors the catalytic subunit ALG13 to the ER (By similarity).</text>
</comment>
<comment type="subunit">
    <text evidence="1">Heterodimer with ALG13 to form a functional enzyme.</text>
</comment>
<comment type="subcellular location">
    <subcellularLocation>
        <location evidence="2">Endoplasmic reticulum membrane</location>
        <topology evidence="3">Single-pass membrane protein</topology>
    </subcellularLocation>
    <subcellularLocation>
        <location evidence="2">Nucleus membrane</location>
        <topology evidence="3">Single-pass membrane protein</topology>
    </subcellularLocation>
</comment>
<comment type="similarity">
    <text evidence="4">Belongs to the ALG14 family.</text>
</comment>
<keyword id="KW-0256">Endoplasmic reticulum</keyword>
<keyword id="KW-0472">Membrane</keyword>
<keyword id="KW-0539">Nucleus</keyword>
<keyword id="KW-1185">Reference proteome</keyword>
<keyword id="KW-0812">Transmembrane</keyword>
<keyword id="KW-1133">Transmembrane helix</keyword>
<sequence length="236" mass="26669">MLLTTAWCLLIWSVTLLLVRICLVIPIFHSSREAGPLTKDKDNVGGRMKNLVLFIFLGSGGHTGEMLRLIEHYQGMLLESAVTIHVGYSDDDSIIKFKNKIHQISVSNTLRAKVIYHRFDKARDVGSSLAGSIKSIIKTAIRSMVLTYRIKSSMRGHPNLTLLNGPGTCCIITFWLKLYHIFLWQPSKIVYVESLARTNRLSLTGMILYPLADEFVVQWADLLPIYPKAKYYGVLV</sequence>
<gene>
    <name type="primary">ALG14</name>
    <name type="ordered locus">KLLA0F18865g</name>
</gene>
<feature type="chain" id="PRO_0000123815" description="UDP-N-acetylglucosamine transferase subunit ALG14">
    <location>
        <begin position="1"/>
        <end position="236"/>
    </location>
</feature>
<feature type="topological domain" description="Lumenal" evidence="2">
    <location>
        <begin position="1"/>
        <end position="7"/>
    </location>
</feature>
<feature type="transmembrane region" description="Helical" evidence="3">
    <location>
        <begin position="8"/>
        <end position="28"/>
    </location>
</feature>
<feature type="topological domain" description="Cytoplasmic" evidence="2">
    <location>
        <begin position="29"/>
        <end position="236"/>
    </location>
</feature>
<reference key="1">
    <citation type="journal article" date="2004" name="Nature">
        <title>Genome evolution in yeasts.</title>
        <authorList>
            <person name="Dujon B."/>
            <person name="Sherman D."/>
            <person name="Fischer G."/>
            <person name="Durrens P."/>
            <person name="Casaregola S."/>
            <person name="Lafontaine I."/>
            <person name="de Montigny J."/>
            <person name="Marck C."/>
            <person name="Neuveglise C."/>
            <person name="Talla E."/>
            <person name="Goffard N."/>
            <person name="Frangeul L."/>
            <person name="Aigle M."/>
            <person name="Anthouard V."/>
            <person name="Babour A."/>
            <person name="Barbe V."/>
            <person name="Barnay S."/>
            <person name="Blanchin S."/>
            <person name="Beckerich J.-M."/>
            <person name="Beyne E."/>
            <person name="Bleykasten C."/>
            <person name="Boisrame A."/>
            <person name="Boyer J."/>
            <person name="Cattolico L."/>
            <person name="Confanioleri F."/>
            <person name="de Daruvar A."/>
            <person name="Despons L."/>
            <person name="Fabre E."/>
            <person name="Fairhead C."/>
            <person name="Ferry-Dumazet H."/>
            <person name="Groppi A."/>
            <person name="Hantraye F."/>
            <person name="Hennequin C."/>
            <person name="Jauniaux N."/>
            <person name="Joyet P."/>
            <person name="Kachouri R."/>
            <person name="Kerrest A."/>
            <person name="Koszul R."/>
            <person name="Lemaire M."/>
            <person name="Lesur I."/>
            <person name="Ma L."/>
            <person name="Muller H."/>
            <person name="Nicaud J.-M."/>
            <person name="Nikolski M."/>
            <person name="Oztas S."/>
            <person name="Ozier-Kalogeropoulos O."/>
            <person name="Pellenz S."/>
            <person name="Potier S."/>
            <person name="Richard G.-F."/>
            <person name="Straub M.-L."/>
            <person name="Suleau A."/>
            <person name="Swennen D."/>
            <person name="Tekaia F."/>
            <person name="Wesolowski-Louvel M."/>
            <person name="Westhof E."/>
            <person name="Wirth B."/>
            <person name="Zeniou-Meyer M."/>
            <person name="Zivanovic Y."/>
            <person name="Bolotin-Fukuhara M."/>
            <person name="Thierry A."/>
            <person name="Bouchier C."/>
            <person name="Caudron B."/>
            <person name="Scarpelli C."/>
            <person name="Gaillardin C."/>
            <person name="Weissenbach J."/>
            <person name="Wincker P."/>
            <person name="Souciet J.-L."/>
        </authorList>
    </citation>
    <scope>NUCLEOTIDE SEQUENCE [LARGE SCALE GENOMIC DNA]</scope>
    <source>
        <strain>ATCC 8585 / CBS 2359 / DSM 70799 / NBRC 1267 / NRRL Y-1140 / WM37</strain>
    </source>
</reference>